<accession>Q1J9D8</accession>
<reference key="1">
    <citation type="journal article" date="2006" name="Proc. Natl. Acad. Sci. U.S.A.">
        <title>Molecular genetic anatomy of inter- and intraserotype variation in the human bacterial pathogen group A Streptococcus.</title>
        <authorList>
            <person name="Beres S.B."/>
            <person name="Richter E.W."/>
            <person name="Nagiec M.J."/>
            <person name="Sumby P."/>
            <person name="Porcella S.F."/>
            <person name="DeLeo F.R."/>
            <person name="Musser J.M."/>
        </authorList>
    </citation>
    <scope>NUCLEOTIDE SEQUENCE [LARGE SCALE GENOMIC DNA]</scope>
    <source>
        <strain>MGAS2096</strain>
    </source>
</reference>
<name>Y1821_STRPB</name>
<protein>
    <recommendedName>
        <fullName evidence="1">UPF0246 protein MGAS2096_Spy1821</fullName>
    </recommendedName>
</protein>
<dbReference type="EMBL" id="CP000261">
    <property type="protein sequence ID" value="ABF36873.1"/>
    <property type="molecule type" value="Genomic_DNA"/>
</dbReference>
<dbReference type="SMR" id="Q1J9D8"/>
<dbReference type="KEGG" id="spj:MGAS2096_Spy1821"/>
<dbReference type="HOGENOM" id="CLU_061989_2_1_9"/>
<dbReference type="GO" id="GO:0005829">
    <property type="term" value="C:cytosol"/>
    <property type="evidence" value="ECO:0007669"/>
    <property type="project" value="TreeGrafter"/>
</dbReference>
<dbReference type="GO" id="GO:0033194">
    <property type="term" value="P:response to hydroperoxide"/>
    <property type="evidence" value="ECO:0007669"/>
    <property type="project" value="TreeGrafter"/>
</dbReference>
<dbReference type="HAMAP" id="MF_00652">
    <property type="entry name" value="UPF0246"/>
    <property type="match status" value="1"/>
</dbReference>
<dbReference type="InterPro" id="IPR005583">
    <property type="entry name" value="YaaA"/>
</dbReference>
<dbReference type="NCBIfam" id="NF002543">
    <property type="entry name" value="PRK02101.1-4"/>
    <property type="match status" value="1"/>
</dbReference>
<dbReference type="PANTHER" id="PTHR30283:SF4">
    <property type="entry name" value="PEROXIDE STRESS RESISTANCE PROTEIN YAAA"/>
    <property type="match status" value="1"/>
</dbReference>
<dbReference type="PANTHER" id="PTHR30283">
    <property type="entry name" value="PEROXIDE STRESS RESPONSE PROTEIN YAAA"/>
    <property type="match status" value="1"/>
</dbReference>
<dbReference type="Pfam" id="PF03883">
    <property type="entry name" value="H2O2_YaaD"/>
    <property type="match status" value="1"/>
</dbReference>
<proteinExistence type="inferred from homology"/>
<evidence type="ECO:0000255" key="1">
    <source>
        <dbReference type="HAMAP-Rule" id="MF_00652"/>
    </source>
</evidence>
<comment type="similarity">
    <text evidence="1">Belongs to the UPF0246 family.</text>
</comment>
<organism>
    <name type="scientific">Streptococcus pyogenes serotype M12 (strain MGAS2096)</name>
    <dbReference type="NCBI Taxonomy" id="370553"/>
    <lineage>
        <taxon>Bacteria</taxon>
        <taxon>Bacillati</taxon>
        <taxon>Bacillota</taxon>
        <taxon>Bacilli</taxon>
        <taxon>Lactobacillales</taxon>
        <taxon>Streptococcaceae</taxon>
        <taxon>Streptococcus</taxon>
    </lineage>
</organism>
<feature type="chain" id="PRO_0000262067" description="UPF0246 protein MGAS2096_Spy1821">
    <location>
        <begin position="1"/>
        <end position="243"/>
    </location>
</feature>
<sequence length="243" mass="28247">MLTFLIPTAKEMVIPKESYPHLLPQPSQAILKAMAAMTTEDLAKSYRIKEEAAKKEQQRWQDMASQQSLAYPAYQLFNGLMYRHIKRDKLTTQEQAYLTQQVYITSSFYGIIPANHPIAEHRHDFHTRIKIEGQSLKSYWRPCYNQFAKEHPQVISLLSSEFDDVFSKDCKQLWISPKFMAEKEGRFKTHSTISKKARGAFLTACMENNCQTVDSLKSLVFAGFYYHPDLSTDHEFVYIKKEA</sequence>
<gene>
    <name type="ordered locus">MGAS2096_Spy1821</name>
</gene>